<organism>
    <name type="scientific">Shewanella amazonensis (strain ATCC BAA-1098 / SB2B)</name>
    <dbReference type="NCBI Taxonomy" id="326297"/>
    <lineage>
        <taxon>Bacteria</taxon>
        <taxon>Pseudomonadati</taxon>
        <taxon>Pseudomonadota</taxon>
        <taxon>Gammaproteobacteria</taxon>
        <taxon>Alteromonadales</taxon>
        <taxon>Shewanellaceae</taxon>
        <taxon>Shewanella</taxon>
    </lineage>
</organism>
<evidence type="ECO:0000255" key="1">
    <source>
        <dbReference type="HAMAP-Rule" id="MF_00436"/>
    </source>
</evidence>
<evidence type="ECO:0000255" key="2">
    <source>
        <dbReference type="PROSITE-ProRule" id="PRU01346"/>
    </source>
</evidence>
<evidence type="ECO:0000256" key="3">
    <source>
        <dbReference type="SAM" id="MobiDB-lite"/>
    </source>
</evidence>
<keyword id="KW-1185">Reference proteome</keyword>
<keyword id="KW-0694">RNA-binding</keyword>
<keyword id="KW-0346">Stress response</keyword>
<reference key="1">
    <citation type="submission" date="2006-12" db="EMBL/GenBank/DDBJ databases">
        <title>Complete sequence of Shewanella amazonensis SB2B.</title>
        <authorList>
            <consortium name="US DOE Joint Genome Institute"/>
            <person name="Copeland A."/>
            <person name="Lucas S."/>
            <person name="Lapidus A."/>
            <person name="Barry K."/>
            <person name="Detter J.C."/>
            <person name="Glavina del Rio T."/>
            <person name="Hammon N."/>
            <person name="Israni S."/>
            <person name="Dalin E."/>
            <person name="Tice H."/>
            <person name="Pitluck S."/>
            <person name="Munk A.C."/>
            <person name="Brettin T."/>
            <person name="Bruce D."/>
            <person name="Han C."/>
            <person name="Tapia R."/>
            <person name="Gilna P."/>
            <person name="Schmutz J."/>
            <person name="Larimer F."/>
            <person name="Land M."/>
            <person name="Hauser L."/>
            <person name="Kyrpides N."/>
            <person name="Mikhailova N."/>
            <person name="Fredrickson J."/>
            <person name="Richardson P."/>
        </authorList>
    </citation>
    <scope>NUCLEOTIDE SEQUENCE [LARGE SCALE GENOMIC DNA]</scope>
    <source>
        <strain>ATCC BAA-1098 / SB2B</strain>
    </source>
</reference>
<name>HFQ_SHEAM</name>
<protein>
    <recommendedName>
        <fullName evidence="1">RNA-binding protein Hfq</fullName>
    </recommendedName>
</protein>
<comment type="function">
    <text evidence="1">RNA chaperone that binds small regulatory RNA (sRNAs) and mRNAs to facilitate mRNA translational regulation in response to envelope stress, environmental stress and changes in metabolite concentrations. Also binds with high specificity to tRNAs.</text>
</comment>
<comment type="subunit">
    <text evidence="1">Homohexamer.</text>
</comment>
<comment type="similarity">
    <text evidence="1">Belongs to the Hfq family.</text>
</comment>
<accession>A1SA21</accession>
<proteinExistence type="inferred from homology"/>
<dbReference type="EMBL" id="CP000507">
    <property type="protein sequence ID" value="ABM01228.1"/>
    <property type="molecule type" value="Genomic_DNA"/>
</dbReference>
<dbReference type="RefSeq" id="WP_011761132.1">
    <property type="nucleotide sequence ID" value="NC_008700.1"/>
</dbReference>
<dbReference type="SMR" id="A1SA21"/>
<dbReference type="STRING" id="326297.Sama_3025"/>
<dbReference type="KEGG" id="saz:Sama_3025"/>
<dbReference type="eggNOG" id="COG1923">
    <property type="taxonomic scope" value="Bacteria"/>
</dbReference>
<dbReference type="HOGENOM" id="CLU_113688_2_1_6"/>
<dbReference type="OrthoDB" id="9799751at2"/>
<dbReference type="Proteomes" id="UP000009175">
    <property type="component" value="Chromosome"/>
</dbReference>
<dbReference type="GO" id="GO:0005829">
    <property type="term" value="C:cytosol"/>
    <property type="evidence" value="ECO:0007669"/>
    <property type="project" value="TreeGrafter"/>
</dbReference>
<dbReference type="GO" id="GO:0003723">
    <property type="term" value="F:RNA binding"/>
    <property type="evidence" value="ECO:0007669"/>
    <property type="project" value="UniProtKB-UniRule"/>
</dbReference>
<dbReference type="GO" id="GO:0006355">
    <property type="term" value="P:regulation of DNA-templated transcription"/>
    <property type="evidence" value="ECO:0007669"/>
    <property type="project" value="InterPro"/>
</dbReference>
<dbReference type="GO" id="GO:0043487">
    <property type="term" value="P:regulation of RNA stability"/>
    <property type="evidence" value="ECO:0007669"/>
    <property type="project" value="TreeGrafter"/>
</dbReference>
<dbReference type="GO" id="GO:0045974">
    <property type="term" value="P:regulation of translation, ncRNA-mediated"/>
    <property type="evidence" value="ECO:0007669"/>
    <property type="project" value="TreeGrafter"/>
</dbReference>
<dbReference type="CDD" id="cd01716">
    <property type="entry name" value="Hfq"/>
    <property type="match status" value="1"/>
</dbReference>
<dbReference type="FunFam" id="2.30.30.100:FF:000001">
    <property type="entry name" value="RNA-binding protein Hfq"/>
    <property type="match status" value="1"/>
</dbReference>
<dbReference type="Gene3D" id="2.30.30.100">
    <property type="match status" value="1"/>
</dbReference>
<dbReference type="HAMAP" id="MF_00436">
    <property type="entry name" value="Hfq"/>
    <property type="match status" value="1"/>
</dbReference>
<dbReference type="InterPro" id="IPR005001">
    <property type="entry name" value="Hfq"/>
</dbReference>
<dbReference type="InterPro" id="IPR010920">
    <property type="entry name" value="LSM_dom_sf"/>
</dbReference>
<dbReference type="InterPro" id="IPR047575">
    <property type="entry name" value="Sm"/>
</dbReference>
<dbReference type="NCBIfam" id="TIGR02383">
    <property type="entry name" value="Hfq"/>
    <property type="match status" value="1"/>
</dbReference>
<dbReference type="NCBIfam" id="NF001602">
    <property type="entry name" value="PRK00395.1"/>
    <property type="match status" value="1"/>
</dbReference>
<dbReference type="PANTHER" id="PTHR34772">
    <property type="entry name" value="RNA-BINDING PROTEIN HFQ"/>
    <property type="match status" value="1"/>
</dbReference>
<dbReference type="PANTHER" id="PTHR34772:SF1">
    <property type="entry name" value="RNA-BINDING PROTEIN HFQ"/>
    <property type="match status" value="1"/>
</dbReference>
<dbReference type="Pfam" id="PF17209">
    <property type="entry name" value="Hfq"/>
    <property type="match status" value="1"/>
</dbReference>
<dbReference type="SUPFAM" id="SSF50182">
    <property type="entry name" value="Sm-like ribonucleoproteins"/>
    <property type="match status" value="1"/>
</dbReference>
<dbReference type="PROSITE" id="PS52002">
    <property type="entry name" value="SM"/>
    <property type="match status" value="1"/>
</dbReference>
<gene>
    <name evidence="1" type="primary">hfq</name>
    <name type="ordered locus">Sama_3025</name>
</gene>
<sequence length="91" mass="10036">MAKGQSLQDPFLNALRRERVPVSIYLVNGIKLQGQVESFDQFVILLKNTVSQMVYKHAISTVVPSRPFNVGSHQGGSSNYNAQQDDSAGEQ</sequence>
<feature type="chain" id="PRO_1000025932" description="RNA-binding protein Hfq">
    <location>
        <begin position="1"/>
        <end position="91"/>
    </location>
</feature>
<feature type="domain" description="Sm" evidence="2">
    <location>
        <begin position="9"/>
        <end position="68"/>
    </location>
</feature>
<feature type="region of interest" description="Disordered" evidence="3">
    <location>
        <begin position="66"/>
        <end position="91"/>
    </location>
</feature>
<feature type="compositionally biased region" description="Polar residues" evidence="3">
    <location>
        <begin position="71"/>
        <end position="91"/>
    </location>
</feature>